<protein>
    <recommendedName>
        <fullName evidence="1">NH(3)-dependent NAD(+) synthetase</fullName>
        <ecNumber evidence="1">6.3.1.5</ecNumber>
    </recommendedName>
</protein>
<accession>P65509</accession>
<accession>Q97Q13</accession>
<proteinExistence type="inferred from homology"/>
<keyword id="KW-0067">ATP-binding</keyword>
<keyword id="KW-0436">Ligase</keyword>
<keyword id="KW-0460">Magnesium</keyword>
<keyword id="KW-0479">Metal-binding</keyword>
<keyword id="KW-0520">NAD</keyword>
<keyword id="KW-0547">Nucleotide-binding</keyword>
<keyword id="KW-1185">Reference proteome</keyword>
<comment type="function">
    <text evidence="1">Catalyzes the ATP-dependent amidation of deamido-NAD to form NAD. Uses ammonia as a nitrogen source.</text>
</comment>
<comment type="catalytic activity">
    <reaction evidence="1">
        <text>deamido-NAD(+) + NH4(+) + ATP = AMP + diphosphate + NAD(+) + H(+)</text>
        <dbReference type="Rhea" id="RHEA:21188"/>
        <dbReference type="ChEBI" id="CHEBI:15378"/>
        <dbReference type="ChEBI" id="CHEBI:28938"/>
        <dbReference type="ChEBI" id="CHEBI:30616"/>
        <dbReference type="ChEBI" id="CHEBI:33019"/>
        <dbReference type="ChEBI" id="CHEBI:57540"/>
        <dbReference type="ChEBI" id="CHEBI:58437"/>
        <dbReference type="ChEBI" id="CHEBI:456215"/>
        <dbReference type="EC" id="6.3.1.5"/>
    </reaction>
</comment>
<comment type="pathway">
    <text evidence="1">Cofactor biosynthesis; NAD(+) biosynthesis; NAD(+) from deamido-NAD(+) (ammonia route): step 1/1.</text>
</comment>
<comment type="subunit">
    <text evidence="1">Homodimer.</text>
</comment>
<comment type="similarity">
    <text evidence="1">Belongs to the NAD synthetase family.</text>
</comment>
<sequence>MSLQETIIQELGVKPVIDAQEEIRRSIDFLKRYLKKHPFLKTFVLGISGGQDSTLAGRLAQLAMEELRAETGDDSYKFIAVRLPYGVQADEADAQKALAFIQPDVSLVVNIKESADAMTAAVEATGSPVSDFNKGNIKARCRMIAQYALAGSHSGAVIGTDHAAENITGFFTKFGDGGADILPLYRLNKRQGKQLLQKLGAEPALYEKIPTADLEEDKPGLADEVALGVTYAEIDDYLEGKTISPEAQATIENWWHKGQHKRHLPITVFDDFWE</sequence>
<dbReference type="EC" id="6.3.1.5" evidence="1"/>
<dbReference type="EMBL" id="AE007317">
    <property type="protein sequence ID" value="AAL00080.1"/>
    <property type="molecule type" value="Genomic_DNA"/>
</dbReference>
<dbReference type="PIR" id="C98031">
    <property type="entry name" value="C98031"/>
</dbReference>
<dbReference type="RefSeq" id="NP_358869.1">
    <property type="nucleotide sequence ID" value="NC_003098.1"/>
</dbReference>
<dbReference type="RefSeq" id="WP_000058033.1">
    <property type="nucleotide sequence ID" value="NC_003098.1"/>
</dbReference>
<dbReference type="SMR" id="P65509"/>
<dbReference type="STRING" id="171101.spr1276"/>
<dbReference type="GeneID" id="45653323"/>
<dbReference type="KEGG" id="spr:spr1276"/>
<dbReference type="PATRIC" id="fig|171101.6.peg.1385"/>
<dbReference type="eggNOG" id="COG0171">
    <property type="taxonomic scope" value="Bacteria"/>
</dbReference>
<dbReference type="HOGENOM" id="CLU_059327_3_0_9"/>
<dbReference type="UniPathway" id="UPA00253">
    <property type="reaction ID" value="UER00333"/>
</dbReference>
<dbReference type="Proteomes" id="UP000000586">
    <property type="component" value="Chromosome"/>
</dbReference>
<dbReference type="GO" id="GO:0005737">
    <property type="term" value="C:cytoplasm"/>
    <property type="evidence" value="ECO:0000318"/>
    <property type="project" value="GO_Central"/>
</dbReference>
<dbReference type="GO" id="GO:0005524">
    <property type="term" value="F:ATP binding"/>
    <property type="evidence" value="ECO:0007669"/>
    <property type="project" value="UniProtKB-UniRule"/>
</dbReference>
<dbReference type="GO" id="GO:0004359">
    <property type="term" value="F:glutaminase activity"/>
    <property type="evidence" value="ECO:0007669"/>
    <property type="project" value="InterPro"/>
</dbReference>
<dbReference type="GO" id="GO:0046872">
    <property type="term" value="F:metal ion binding"/>
    <property type="evidence" value="ECO:0007669"/>
    <property type="project" value="UniProtKB-KW"/>
</dbReference>
<dbReference type="GO" id="GO:0003952">
    <property type="term" value="F:NAD+ synthase (glutamine-hydrolyzing) activity"/>
    <property type="evidence" value="ECO:0007669"/>
    <property type="project" value="InterPro"/>
</dbReference>
<dbReference type="GO" id="GO:0008795">
    <property type="term" value="F:NAD+ synthase activity"/>
    <property type="evidence" value="ECO:0007669"/>
    <property type="project" value="UniProtKB-UniRule"/>
</dbReference>
<dbReference type="GO" id="GO:0009435">
    <property type="term" value="P:NAD biosynthetic process"/>
    <property type="evidence" value="ECO:0000318"/>
    <property type="project" value="GO_Central"/>
</dbReference>
<dbReference type="CDD" id="cd00553">
    <property type="entry name" value="NAD_synthase"/>
    <property type="match status" value="1"/>
</dbReference>
<dbReference type="FunFam" id="3.40.50.620:FF:000015">
    <property type="entry name" value="NH(3)-dependent NAD(+) synthetase"/>
    <property type="match status" value="1"/>
</dbReference>
<dbReference type="Gene3D" id="3.40.50.620">
    <property type="entry name" value="HUPs"/>
    <property type="match status" value="1"/>
</dbReference>
<dbReference type="HAMAP" id="MF_00193">
    <property type="entry name" value="NadE_ammonia_dep"/>
    <property type="match status" value="1"/>
</dbReference>
<dbReference type="InterPro" id="IPR022310">
    <property type="entry name" value="NAD/GMP_synthase"/>
</dbReference>
<dbReference type="InterPro" id="IPR003694">
    <property type="entry name" value="NAD_synthase"/>
</dbReference>
<dbReference type="InterPro" id="IPR022926">
    <property type="entry name" value="NH(3)-dep_NAD(+)_synth"/>
</dbReference>
<dbReference type="InterPro" id="IPR014729">
    <property type="entry name" value="Rossmann-like_a/b/a_fold"/>
</dbReference>
<dbReference type="NCBIfam" id="TIGR00552">
    <property type="entry name" value="nadE"/>
    <property type="match status" value="1"/>
</dbReference>
<dbReference type="NCBIfam" id="NF001979">
    <property type="entry name" value="PRK00768.1"/>
    <property type="match status" value="1"/>
</dbReference>
<dbReference type="PANTHER" id="PTHR23090">
    <property type="entry name" value="NH 3 /GLUTAMINE-DEPENDENT NAD + SYNTHETASE"/>
    <property type="match status" value="1"/>
</dbReference>
<dbReference type="PANTHER" id="PTHR23090:SF7">
    <property type="entry name" value="NH(3)-DEPENDENT NAD(+) SYNTHETASE"/>
    <property type="match status" value="1"/>
</dbReference>
<dbReference type="Pfam" id="PF02540">
    <property type="entry name" value="NAD_synthase"/>
    <property type="match status" value="1"/>
</dbReference>
<dbReference type="SUPFAM" id="SSF52402">
    <property type="entry name" value="Adenine nucleotide alpha hydrolases-like"/>
    <property type="match status" value="1"/>
</dbReference>
<name>NADE_STRR6</name>
<organism>
    <name type="scientific">Streptococcus pneumoniae (strain ATCC BAA-255 / R6)</name>
    <dbReference type="NCBI Taxonomy" id="171101"/>
    <lineage>
        <taxon>Bacteria</taxon>
        <taxon>Bacillati</taxon>
        <taxon>Bacillota</taxon>
        <taxon>Bacilli</taxon>
        <taxon>Lactobacillales</taxon>
        <taxon>Streptococcaceae</taxon>
        <taxon>Streptococcus</taxon>
    </lineage>
</organism>
<reference key="1">
    <citation type="journal article" date="2001" name="J. Bacteriol.">
        <title>Genome of the bacterium Streptococcus pneumoniae strain R6.</title>
        <authorList>
            <person name="Hoskins J."/>
            <person name="Alborn W.E. Jr."/>
            <person name="Arnold J."/>
            <person name="Blaszczak L.C."/>
            <person name="Burgett S."/>
            <person name="DeHoff B.S."/>
            <person name="Estrem S.T."/>
            <person name="Fritz L."/>
            <person name="Fu D.-J."/>
            <person name="Fuller W."/>
            <person name="Geringer C."/>
            <person name="Gilmour R."/>
            <person name="Glass J.S."/>
            <person name="Khoja H."/>
            <person name="Kraft A.R."/>
            <person name="Lagace R.E."/>
            <person name="LeBlanc D.J."/>
            <person name="Lee L.N."/>
            <person name="Lefkowitz E.J."/>
            <person name="Lu J."/>
            <person name="Matsushima P."/>
            <person name="McAhren S.M."/>
            <person name="McHenney M."/>
            <person name="McLeaster K."/>
            <person name="Mundy C.W."/>
            <person name="Nicas T.I."/>
            <person name="Norris F.H."/>
            <person name="O'Gara M."/>
            <person name="Peery R.B."/>
            <person name="Robertson G.T."/>
            <person name="Rockey P."/>
            <person name="Sun P.-M."/>
            <person name="Winkler M.E."/>
            <person name="Yang Y."/>
            <person name="Young-Bellido M."/>
            <person name="Zhao G."/>
            <person name="Zook C.A."/>
            <person name="Baltz R.H."/>
            <person name="Jaskunas S.R."/>
            <person name="Rosteck P.R. Jr."/>
            <person name="Skatrud P.L."/>
            <person name="Glass J.I."/>
        </authorList>
    </citation>
    <scope>NUCLEOTIDE SEQUENCE [LARGE SCALE GENOMIC DNA]</scope>
    <source>
        <strain>ATCC BAA-255 / R6</strain>
    </source>
</reference>
<evidence type="ECO:0000255" key="1">
    <source>
        <dbReference type="HAMAP-Rule" id="MF_00193"/>
    </source>
</evidence>
<gene>
    <name evidence="1" type="primary">nadE</name>
    <name type="ordered locus">spr1276</name>
</gene>
<feature type="chain" id="PRO_0000152207" description="NH(3)-dependent NAD(+) synthetase">
    <location>
        <begin position="1"/>
        <end position="274"/>
    </location>
</feature>
<feature type="binding site" evidence="1">
    <location>
        <begin position="46"/>
        <end position="53"/>
    </location>
    <ligand>
        <name>ATP</name>
        <dbReference type="ChEBI" id="CHEBI:30616"/>
    </ligand>
</feature>
<feature type="binding site" evidence="1">
    <location>
        <position position="52"/>
    </location>
    <ligand>
        <name>Mg(2+)</name>
        <dbReference type="ChEBI" id="CHEBI:18420"/>
    </ligand>
</feature>
<feature type="binding site" evidence="1">
    <location>
        <position position="140"/>
    </location>
    <ligand>
        <name>deamido-NAD(+)</name>
        <dbReference type="ChEBI" id="CHEBI:58437"/>
    </ligand>
</feature>
<feature type="binding site" evidence="1">
    <location>
        <position position="160"/>
    </location>
    <ligand>
        <name>ATP</name>
        <dbReference type="ChEBI" id="CHEBI:30616"/>
    </ligand>
</feature>
<feature type="binding site" evidence="1">
    <location>
        <position position="165"/>
    </location>
    <ligand>
        <name>Mg(2+)</name>
        <dbReference type="ChEBI" id="CHEBI:18420"/>
    </ligand>
</feature>
<feature type="binding site" evidence="1">
    <location>
        <position position="173"/>
    </location>
    <ligand>
        <name>deamido-NAD(+)</name>
        <dbReference type="ChEBI" id="CHEBI:58437"/>
    </ligand>
</feature>
<feature type="binding site" evidence="1">
    <location>
        <position position="180"/>
    </location>
    <ligand>
        <name>deamido-NAD(+)</name>
        <dbReference type="ChEBI" id="CHEBI:58437"/>
    </ligand>
</feature>
<feature type="binding site" evidence="1">
    <location>
        <position position="189"/>
    </location>
    <ligand>
        <name>ATP</name>
        <dbReference type="ChEBI" id="CHEBI:30616"/>
    </ligand>
</feature>
<feature type="binding site" evidence="1">
    <location>
        <position position="211"/>
    </location>
    <ligand>
        <name>ATP</name>
        <dbReference type="ChEBI" id="CHEBI:30616"/>
    </ligand>
</feature>
<feature type="binding site" evidence="1">
    <location>
        <begin position="260"/>
        <end position="261"/>
    </location>
    <ligand>
        <name>deamido-NAD(+)</name>
        <dbReference type="ChEBI" id="CHEBI:58437"/>
    </ligand>
</feature>